<dbReference type="EMBL" id="BX571857">
    <property type="protein sequence ID" value="CAG43006.1"/>
    <property type="molecule type" value="Genomic_DNA"/>
</dbReference>
<dbReference type="RefSeq" id="WP_000073352.1">
    <property type="nucleotide sequence ID" value="NC_002953.3"/>
</dbReference>
<dbReference type="SMR" id="Q6G9R8"/>
<dbReference type="KEGG" id="sas:SAS1229"/>
<dbReference type="HOGENOM" id="CLU_002472_4_0_9"/>
<dbReference type="GO" id="GO:0005829">
    <property type="term" value="C:cytosol"/>
    <property type="evidence" value="ECO:0007669"/>
    <property type="project" value="TreeGrafter"/>
</dbReference>
<dbReference type="GO" id="GO:0005524">
    <property type="term" value="F:ATP binding"/>
    <property type="evidence" value="ECO:0007669"/>
    <property type="project" value="UniProtKB-UniRule"/>
</dbReference>
<dbReference type="GO" id="GO:0140664">
    <property type="term" value="F:ATP-dependent DNA damage sensor activity"/>
    <property type="evidence" value="ECO:0007669"/>
    <property type="project" value="InterPro"/>
</dbReference>
<dbReference type="GO" id="GO:0003684">
    <property type="term" value="F:damaged DNA binding"/>
    <property type="evidence" value="ECO:0007669"/>
    <property type="project" value="UniProtKB-UniRule"/>
</dbReference>
<dbReference type="GO" id="GO:0030983">
    <property type="term" value="F:mismatched DNA binding"/>
    <property type="evidence" value="ECO:0007669"/>
    <property type="project" value="InterPro"/>
</dbReference>
<dbReference type="GO" id="GO:0006298">
    <property type="term" value="P:mismatch repair"/>
    <property type="evidence" value="ECO:0007669"/>
    <property type="project" value="UniProtKB-UniRule"/>
</dbReference>
<dbReference type="CDD" id="cd03284">
    <property type="entry name" value="ABC_MutS1"/>
    <property type="match status" value="1"/>
</dbReference>
<dbReference type="FunFam" id="1.10.1420.10:FF:000007">
    <property type="entry name" value="DNA mismatch repair protein MutS"/>
    <property type="match status" value="1"/>
</dbReference>
<dbReference type="FunFam" id="3.40.1170.10:FF:000001">
    <property type="entry name" value="DNA mismatch repair protein MutS"/>
    <property type="match status" value="1"/>
</dbReference>
<dbReference type="FunFam" id="3.40.50.300:FF:000896">
    <property type="entry name" value="DNA mismatch repair protein MutS"/>
    <property type="match status" value="1"/>
</dbReference>
<dbReference type="Gene3D" id="1.10.1420.10">
    <property type="match status" value="2"/>
</dbReference>
<dbReference type="Gene3D" id="3.40.1170.10">
    <property type="entry name" value="DNA repair protein MutS, domain I"/>
    <property type="match status" value="1"/>
</dbReference>
<dbReference type="Gene3D" id="3.30.420.110">
    <property type="entry name" value="MutS, connector domain"/>
    <property type="match status" value="1"/>
</dbReference>
<dbReference type="Gene3D" id="3.40.50.300">
    <property type="entry name" value="P-loop containing nucleotide triphosphate hydrolases"/>
    <property type="match status" value="1"/>
</dbReference>
<dbReference type="HAMAP" id="MF_00096">
    <property type="entry name" value="MutS"/>
    <property type="match status" value="1"/>
</dbReference>
<dbReference type="InterPro" id="IPR005748">
    <property type="entry name" value="DNA_mismatch_repair_MutS"/>
</dbReference>
<dbReference type="InterPro" id="IPR007695">
    <property type="entry name" value="DNA_mismatch_repair_MutS-lik_N"/>
</dbReference>
<dbReference type="InterPro" id="IPR017261">
    <property type="entry name" value="DNA_mismatch_repair_MutS/MSH"/>
</dbReference>
<dbReference type="InterPro" id="IPR000432">
    <property type="entry name" value="DNA_mismatch_repair_MutS_C"/>
</dbReference>
<dbReference type="InterPro" id="IPR007861">
    <property type="entry name" value="DNA_mismatch_repair_MutS_clamp"/>
</dbReference>
<dbReference type="InterPro" id="IPR007696">
    <property type="entry name" value="DNA_mismatch_repair_MutS_core"/>
</dbReference>
<dbReference type="InterPro" id="IPR016151">
    <property type="entry name" value="DNA_mismatch_repair_MutS_N"/>
</dbReference>
<dbReference type="InterPro" id="IPR036187">
    <property type="entry name" value="DNA_mismatch_repair_MutS_sf"/>
</dbReference>
<dbReference type="InterPro" id="IPR007860">
    <property type="entry name" value="DNA_mmatch_repair_MutS_con_dom"/>
</dbReference>
<dbReference type="InterPro" id="IPR045076">
    <property type="entry name" value="MutS"/>
</dbReference>
<dbReference type="InterPro" id="IPR036678">
    <property type="entry name" value="MutS_con_dom_sf"/>
</dbReference>
<dbReference type="InterPro" id="IPR027417">
    <property type="entry name" value="P-loop_NTPase"/>
</dbReference>
<dbReference type="NCBIfam" id="TIGR01070">
    <property type="entry name" value="mutS1"/>
    <property type="match status" value="1"/>
</dbReference>
<dbReference type="NCBIfam" id="NF003810">
    <property type="entry name" value="PRK05399.1"/>
    <property type="match status" value="1"/>
</dbReference>
<dbReference type="PANTHER" id="PTHR11361:SF34">
    <property type="entry name" value="DNA MISMATCH REPAIR PROTEIN MSH1, MITOCHONDRIAL"/>
    <property type="match status" value="1"/>
</dbReference>
<dbReference type="PANTHER" id="PTHR11361">
    <property type="entry name" value="DNA MISMATCH REPAIR PROTEIN MUTS FAMILY MEMBER"/>
    <property type="match status" value="1"/>
</dbReference>
<dbReference type="Pfam" id="PF01624">
    <property type="entry name" value="MutS_I"/>
    <property type="match status" value="1"/>
</dbReference>
<dbReference type="Pfam" id="PF05188">
    <property type="entry name" value="MutS_II"/>
    <property type="match status" value="1"/>
</dbReference>
<dbReference type="Pfam" id="PF05192">
    <property type="entry name" value="MutS_III"/>
    <property type="match status" value="1"/>
</dbReference>
<dbReference type="Pfam" id="PF05190">
    <property type="entry name" value="MutS_IV"/>
    <property type="match status" value="1"/>
</dbReference>
<dbReference type="Pfam" id="PF00488">
    <property type="entry name" value="MutS_V"/>
    <property type="match status" value="1"/>
</dbReference>
<dbReference type="PIRSF" id="PIRSF037677">
    <property type="entry name" value="DNA_mis_repair_Msh6"/>
    <property type="match status" value="1"/>
</dbReference>
<dbReference type="SMART" id="SM00534">
    <property type="entry name" value="MUTSac"/>
    <property type="match status" value="1"/>
</dbReference>
<dbReference type="SMART" id="SM00533">
    <property type="entry name" value="MUTSd"/>
    <property type="match status" value="1"/>
</dbReference>
<dbReference type="SUPFAM" id="SSF55271">
    <property type="entry name" value="DNA repair protein MutS, domain I"/>
    <property type="match status" value="1"/>
</dbReference>
<dbReference type="SUPFAM" id="SSF53150">
    <property type="entry name" value="DNA repair protein MutS, domain II"/>
    <property type="match status" value="1"/>
</dbReference>
<dbReference type="SUPFAM" id="SSF48334">
    <property type="entry name" value="DNA repair protein MutS, domain III"/>
    <property type="match status" value="1"/>
</dbReference>
<dbReference type="SUPFAM" id="SSF52540">
    <property type="entry name" value="P-loop containing nucleoside triphosphate hydrolases"/>
    <property type="match status" value="1"/>
</dbReference>
<dbReference type="PROSITE" id="PS00486">
    <property type="entry name" value="DNA_MISMATCH_REPAIR_2"/>
    <property type="match status" value="1"/>
</dbReference>
<comment type="function">
    <text evidence="1">This protein is involved in the repair of mismatches in DNA. It is possible that it carries out the mismatch recognition step. This protein has a weak ATPase activity.</text>
</comment>
<comment type="similarity">
    <text evidence="1">Belongs to the DNA mismatch repair MutS family.</text>
</comment>
<accession>Q6G9R8</accession>
<proteinExistence type="inferred from homology"/>
<organism>
    <name type="scientific">Staphylococcus aureus (strain MSSA476)</name>
    <dbReference type="NCBI Taxonomy" id="282459"/>
    <lineage>
        <taxon>Bacteria</taxon>
        <taxon>Bacillati</taxon>
        <taxon>Bacillota</taxon>
        <taxon>Bacilli</taxon>
        <taxon>Bacillales</taxon>
        <taxon>Staphylococcaceae</taxon>
        <taxon>Staphylococcus</taxon>
    </lineage>
</organism>
<sequence length="872" mass="99904">MSNVTPMMQQYLKIKSEYQDCLLFFRLGDFYEMFYEDAKEASRVLEITLTKRDAKKENPIPMCGVPYHSADSYIDTLVNNGYKVAICEQMEDPKQTKGMVRREVVRIVTPGTVMEQGGVDDKQNNYILSFVMNQPEIALSYCDVSTGELKVTHFNDEATLLNEITTINPNEVVINDNISDNLKRQINMVTETITVRETLSSEIYSVNQTEHKLMYQATQLLLDYIHHTQKRDLSHIEDVVQYAAIDYMKMDFYAKRNLELTESIRLKSKKGTLLWLMDETKTPMGARRLKQWIDRPLISKEQIEARLDIVDEFSAHFIERDTLRTYLNQVYDIERLVGRVSYGNVNARDLIQLKHSISEIPNIKALLNSMNQNTLVQVNQLEPLDDLLDILEQSLVEEPPISVKDGGLFKVGFNTQLDEYLEASKNGKTWLAELQAKERQRTGIKSLKISFNKVFGYFIEITRANLQNFEPSEFGYMRKQTLSNAERFITDELKEKEDIILGAEDKAIELEYQLFVQLREEVKKYTERLQQQAKIISELDCLQSFAEIAQKYNYTRPSFSENKTLELVESRHPVVERVMDYNDYVPNNCRLDNETFIYLITGPNMSGKSTYMRQVAIISIMAQMGAYVPCKEAVLPIFDQIFTRIGAADDLVSGKSTFMVEMLEAQKALTYATEDSLIIFDEIGRGTSTYDGLALAQAMIEYVAETSHAKTLFSTHYHELTTLDQALPSLKNVHVAANEYKGELIFLHKVKDGAVDDSYGIQVAKLADLPEKVISRAQVILSEFEASAGKKSSISNLKMVENEPEINQENLNLSVEETTDTLSQKDFEQASFDLFENDQESEIELQIKNLNLSNMTPIEALVKLSELQNQLK</sequence>
<evidence type="ECO:0000255" key="1">
    <source>
        <dbReference type="HAMAP-Rule" id="MF_00096"/>
    </source>
</evidence>
<reference key="1">
    <citation type="journal article" date="2004" name="Proc. Natl. Acad. Sci. U.S.A.">
        <title>Complete genomes of two clinical Staphylococcus aureus strains: evidence for the rapid evolution of virulence and drug resistance.</title>
        <authorList>
            <person name="Holden M.T.G."/>
            <person name="Feil E.J."/>
            <person name="Lindsay J.A."/>
            <person name="Peacock S.J."/>
            <person name="Day N.P.J."/>
            <person name="Enright M.C."/>
            <person name="Foster T.J."/>
            <person name="Moore C.E."/>
            <person name="Hurst L."/>
            <person name="Atkin R."/>
            <person name="Barron A."/>
            <person name="Bason N."/>
            <person name="Bentley S.D."/>
            <person name="Chillingworth C."/>
            <person name="Chillingworth T."/>
            <person name="Churcher C."/>
            <person name="Clark L."/>
            <person name="Corton C."/>
            <person name="Cronin A."/>
            <person name="Doggett J."/>
            <person name="Dowd L."/>
            <person name="Feltwell T."/>
            <person name="Hance Z."/>
            <person name="Harris B."/>
            <person name="Hauser H."/>
            <person name="Holroyd S."/>
            <person name="Jagels K."/>
            <person name="James K.D."/>
            <person name="Lennard N."/>
            <person name="Line A."/>
            <person name="Mayes R."/>
            <person name="Moule S."/>
            <person name="Mungall K."/>
            <person name="Ormond D."/>
            <person name="Quail M.A."/>
            <person name="Rabbinowitsch E."/>
            <person name="Rutherford K.M."/>
            <person name="Sanders M."/>
            <person name="Sharp S."/>
            <person name="Simmonds M."/>
            <person name="Stevens K."/>
            <person name="Whitehead S."/>
            <person name="Barrell B.G."/>
            <person name="Spratt B.G."/>
            <person name="Parkhill J."/>
        </authorList>
    </citation>
    <scope>NUCLEOTIDE SEQUENCE [LARGE SCALE GENOMIC DNA]</scope>
    <source>
        <strain>MSSA476</strain>
    </source>
</reference>
<feature type="chain" id="PRO_0000115138" description="DNA mismatch repair protein MutS">
    <location>
        <begin position="1"/>
        <end position="872"/>
    </location>
</feature>
<feature type="binding site" evidence="1">
    <location>
        <begin position="602"/>
        <end position="609"/>
    </location>
    <ligand>
        <name>ATP</name>
        <dbReference type="ChEBI" id="CHEBI:30616"/>
    </ligand>
</feature>
<gene>
    <name evidence="1" type="primary">mutS</name>
    <name type="ordered locus">SAS1229</name>
</gene>
<name>MUTS_STAAS</name>
<protein>
    <recommendedName>
        <fullName evidence="1">DNA mismatch repair protein MutS</fullName>
    </recommendedName>
</protein>
<keyword id="KW-0067">ATP-binding</keyword>
<keyword id="KW-0227">DNA damage</keyword>
<keyword id="KW-0234">DNA repair</keyword>
<keyword id="KW-0238">DNA-binding</keyword>
<keyword id="KW-0547">Nucleotide-binding</keyword>